<evidence type="ECO:0000250" key="1">
    <source>
        <dbReference type="UniProtKB" id="Q8WWM9"/>
    </source>
</evidence>
<evidence type="ECO:0000255" key="2">
    <source>
        <dbReference type="PROSITE-ProRule" id="PRU00238"/>
    </source>
</evidence>
<evidence type="ECO:0000256" key="3">
    <source>
        <dbReference type="SAM" id="MobiDB-lite"/>
    </source>
</evidence>
<evidence type="ECO:0000269" key="4">
    <source>
    </source>
</evidence>
<evidence type="ECO:0000305" key="5"/>
<evidence type="ECO:0000312" key="6">
    <source>
        <dbReference type="EMBL" id="CAG25612.1"/>
    </source>
</evidence>
<evidence type="ECO:0000312" key="7">
    <source>
        <dbReference type="ZFIN" id="ZDB-GENE-060920-1"/>
    </source>
</evidence>
<protein>
    <recommendedName>
        <fullName>Cytoglobin-2</fullName>
    </recommendedName>
    <alternativeName>
        <fullName>Nitric oxygen dioxygenase CYGB</fullName>
        <ecNumber evidence="1">1.14.12.-</ecNumber>
    </alternativeName>
    <alternativeName>
        <fullName>Nitrite reductase CYGB</fullName>
        <ecNumber evidence="1">1.7.-.-</ecNumber>
    </alternativeName>
    <alternativeName>
        <fullName>Pseudoperoxidase CYGB</fullName>
        <ecNumber evidence="1">1.11.1.-</ecNumber>
    </alternativeName>
    <alternativeName>
        <fullName>Superoxide dismutase CYGB</fullName>
        <ecNumber evidence="1">1.15.1.1</ecNumber>
    </alternativeName>
</protein>
<gene>
    <name evidence="7" type="primary">cygb2</name>
    <name evidence="6" type="synonym">cygb-2</name>
</gene>
<name>CYGB2_DANRE</name>
<reference evidence="5 6" key="1">
    <citation type="journal article" date="2005" name="Biochem. Biophys. Res. Commun.">
        <title>Duplicated cytoglobin genes in teleost fishes.</title>
        <authorList>
            <person name="Fuchs C."/>
            <person name="Luckhardt A."/>
            <person name="Gerlach F."/>
            <person name="Burmester T."/>
            <person name="Hankeln T."/>
        </authorList>
    </citation>
    <scope>NUCLEOTIDE SEQUENCE [MRNA]</scope>
    <scope>TISSUE SPECIFICITY</scope>
</reference>
<feature type="chain" id="PRO_0000262322" description="Cytoglobin-2">
    <location>
        <begin position="1"/>
        <end position="179"/>
    </location>
</feature>
<feature type="domain" description="Globin" evidence="2">
    <location>
        <begin position="18"/>
        <end position="167"/>
    </location>
</feature>
<feature type="region of interest" description="Disordered" evidence="3">
    <location>
        <begin position="1"/>
        <end position="20"/>
    </location>
</feature>
<feature type="compositionally biased region" description="Acidic residues" evidence="3">
    <location>
        <begin position="1"/>
        <end position="11"/>
    </location>
</feature>
<feature type="binding site" description="distal binding residue" evidence="1 2">
    <location>
        <position position="81"/>
    </location>
    <ligand>
        <name>heme b</name>
        <dbReference type="ChEBI" id="CHEBI:60344"/>
    </ligand>
    <ligandPart>
        <name>Fe</name>
        <dbReference type="ChEBI" id="CHEBI:18248"/>
    </ligandPart>
</feature>
<feature type="binding site" description="proximal binding residue" evidence="1 2">
    <location>
        <position position="113"/>
    </location>
    <ligand>
        <name>heme b</name>
        <dbReference type="ChEBI" id="CHEBI:60344"/>
    </ligand>
    <ligandPart>
        <name>Fe</name>
        <dbReference type="ChEBI" id="CHEBI:18248"/>
    </ligandPart>
</feature>
<sequence length="179" mass="20598">MEKEREDEETEGRERPEPLTDVERGIIKDTWARVYASCEDVGVTILIRFFVNFPSAKQYFSQFQDMEDPEEMEKSSQLRKHARRVMNAINTVVENLHDPEKVSSVLVLVGKAHAFKYKVEPIYFKILSGVILEILAEEFGECFTPEVQTSWSKLMAALYWHITGAYTEVGWVKLSSSAV</sequence>
<dbReference type="EC" id="1.14.12.-" evidence="1"/>
<dbReference type="EC" id="1.7.-.-" evidence="1"/>
<dbReference type="EC" id="1.11.1.-" evidence="1"/>
<dbReference type="EC" id="1.15.1.1" evidence="1"/>
<dbReference type="EMBL" id="AJ635229">
    <property type="protein sequence ID" value="CAG25612.1"/>
    <property type="molecule type" value="mRNA"/>
</dbReference>
<dbReference type="RefSeq" id="NP_001019395.2">
    <property type="nucleotide sequence ID" value="NM_001024224.2"/>
</dbReference>
<dbReference type="SMR" id="Q575S8"/>
<dbReference type="FunCoup" id="Q575S8">
    <property type="interactions" value="267"/>
</dbReference>
<dbReference type="STRING" id="7955.ENSDARP00000120009"/>
<dbReference type="PaxDb" id="7955-ENSDARP00000120009"/>
<dbReference type="Ensembl" id="ENSDART00000187763">
    <property type="protein sequence ID" value="ENSDARP00000148052"/>
    <property type="gene ID" value="ENSDARG00000114471"/>
</dbReference>
<dbReference type="Ensembl" id="ENSDART00000188886">
    <property type="protein sequence ID" value="ENSDARP00000152544"/>
    <property type="gene ID" value="ENSDARG00000109892"/>
</dbReference>
<dbReference type="GeneID" id="554176"/>
<dbReference type="KEGG" id="dre:554176"/>
<dbReference type="AGR" id="ZFIN:ZDB-GENE-060920-1"/>
<dbReference type="CTD" id="554176"/>
<dbReference type="ZFIN" id="ZDB-GENE-060920-1">
    <property type="gene designation" value="cygb2"/>
</dbReference>
<dbReference type="eggNOG" id="KOG3378">
    <property type="taxonomic scope" value="Eukaryota"/>
</dbReference>
<dbReference type="HOGENOM" id="CLU_003827_10_1_1"/>
<dbReference type="InParanoid" id="Q575S8"/>
<dbReference type="OrthoDB" id="6483840at2759"/>
<dbReference type="PhylomeDB" id="Q575S8"/>
<dbReference type="TreeFam" id="TF332967"/>
<dbReference type="Reactome" id="R-DRE-203615">
    <property type="pathway name" value="eNOS activation"/>
</dbReference>
<dbReference type="Reactome" id="R-DRE-8981607">
    <property type="pathway name" value="Intracellular oxygen transport"/>
</dbReference>
<dbReference type="PRO" id="PR:Q575S8"/>
<dbReference type="Proteomes" id="UP000000437">
    <property type="component" value="Alternate scaffold 6"/>
</dbReference>
<dbReference type="Proteomes" id="UP000000437">
    <property type="component" value="Chromosome 6"/>
</dbReference>
<dbReference type="GO" id="GO:0005737">
    <property type="term" value="C:cytoplasm"/>
    <property type="evidence" value="ECO:0000250"/>
    <property type="project" value="UniProtKB"/>
</dbReference>
<dbReference type="GO" id="GO:0005634">
    <property type="term" value="C:nucleus"/>
    <property type="evidence" value="ECO:0000250"/>
    <property type="project" value="UniProtKB"/>
</dbReference>
<dbReference type="GO" id="GO:0020037">
    <property type="term" value="F:heme binding"/>
    <property type="evidence" value="ECO:0000318"/>
    <property type="project" value="GO_Central"/>
</dbReference>
<dbReference type="GO" id="GO:0005506">
    <property type="term" value="F:iron ion binding"/>
    <property type="evidence" value="ECO:0007669"/>
    <property type="project" value="InterPro"/>
</dbReference>
<dbReference type="GO" id="GO:0141118">
    <property type="term" value="F:nitric oxide dioxygenase activity, heme protein as donor"/>
    <property type="evidence" value="ECO:0000250"/>
    <property type="project" value="UniProtKB"/>
</dbReference>
<dbReference type="GO" id="GO:0098809">
    <property type="term" value="F:nitrite reductase activity"/>
    <property type="evidence" value="ECO:0000314"/>
    <property type="project" value="ZFIN"/>
</dbReference>
<dbReference type="GO" id="GO:0016491">
    <property type="term" value="F:oxidoreductase activity"/>
    <property type="evidence" value="ECO:0000318"/>
    <property type="project" value="GO_Central"/>
</dbReference>
<dbReference type="GO" id="GO:0019825">
    <property type="term" value="F:oxygen binding"/>
    <property type="evidence" value="ECO:0000314"/>
    <property type="project" value="ZFIN"/>
</dbReference>
<dbReference type="GO" id="GO:0004784">
    <property type="term" value="F:superoxide dismutase activity"/>
    <property type="evidence" value="ECO:0000250"/>
    <property type="project" value="UniProtKB"/>
</dbReference>
<dbReference type="GO" id="GO:0046210">
    <property type="term" value="P:nitric oxide catabolic process"/>
    <property type="evidence" value="ECO:0000250"/>
    <property type="project" value="UniProtKB"/>
</dbReference>
<dbReference type="GO" id="GO:0015671">
    <property type="term" value="P:oxygen transport"/>
    <property type="evidence" value="ECO:0007669"/>
    <property type="project" value="InterPro"/>
</dbReference>
<dbReference type="GO" id="GO:0019430">
    <property type="term" value="P:removal of superoxide radicals"/>
    <property type="evidence" value="ECO:0000250"/>
    <property type="project" value="UniProtKB"/>
</dbReference>
<dbReference type="CDD" id="cd08924">
    <property type="entry name" value="Cygb"/>
    <property type="match status" value="1"/>
</dbReference>
<dbReference type="FunFam" id="1.10.490.10:FF:000005">
    <property type="entry name" value="Cytoglobin"/>
    <property type="match status" value="1"/>
</dbReference>
<dbReference type="Gene3D" id="1.10.490.10">
    <property type="entry name" value="Globins"/>
    <property type="match status" value="1"/>
</dbReference>
<dbReference type="InterPro" id="IPR000971">
    <property type="entry name" value="Globin"/>
</dbReference>
<dbReference type="InterPro" id="IPR009050">
    <property type="entry name" value="Globin-like_sf"/>
</dbReference>
<dbReference type="InterPro" id="IPR012292">
    <property type="entry name" value="Globin/Proto"/>
</dbReference>
<dbReference type="InterPro" id="IPR013314">
    <property type="entry name" value="Globin_lamprey/hagfish"/>
</dbReference>
<dbReference type="PANTHER" id="PTHR46783">
    <property type="entry name" value="CYTOGLOBIN"/>
    <property type="match status" value="1"/>
</dbReference>
<dbReference type="PANTHER" id="PTHR46783:SF1">
    <property type="entry name" value="CYTOGLOBIN-1-RELATED"/>
    <property type="match status" value="1"/>
</dbReference>
<dbReference type="Pfam" id="PF00042">
    <property type="entry name" value="Globin"/>
    <property type="match status" value="1"/>
</dbReference>
<dbReference type="PRINTS" id="PR01906">
    <property type="entry name" value="FISHGLOBIN"/>
</dbReference>
<dbReference type="SUPFAM" id="SSF46458">
    <property type="entry name" value="Globin-like"/>
    <property type="match status" value="1"/>
</dbReference>
<dbReference type="PROSITE" id="PS01033">
    <property type="entry name" value="GLOBIN"/>
    <property type="match status" value="1"/>
</dbReference>
<comment type="function">
    <text evidence="1">Probable multifunctional globin with a hexacoordinated heme iron required for the catalysis of various reactions depending on redox condition of the cell as well as oxygen availability. Has a nitric oxide dioxygenase (NOD) activity and is most probably involved in cell-mediated and oxygen-dependent nitric oxide consumption. Under normoxic conditions functions as a nitric oxide dioxygenase (NOD) but under hypoxic conditions the globin may switch its function to that of a nitrite (NO2) reductase (NiR), generating nitric oxide. Could also have peroxidase and superoxide dismutase activities, detoxifying reactive oxygen species and protecting cells against oxidative stress. Also binds dioxygen with low affinity and could function as an oxygen sensor but has probably no function as a respiratory oxygen carrier.</text>
</comment>
<comment type="catalytic activity">
    <reaction evidence="1">
        <text>Fe(II)-heme b-[protein] + nitric oxide + O2 = Fe(III)-heme b-[protein] + nitrate</text>
        <dbReference type="Rhea" id="RHEA:78091"/>
        <dbReference type="Rhea" id="RHEA-COMP:18975"/>
        <dbReference type="Rhea" id="RHEA-COMP:18976"/>
        <dbReference type="ChEBI" id="CHEBI:15379"/>
        <dbReference type="ChEBI" id="CHEBI:16480"/>
        <dbReference type="ChEBI" id="CHEBI:17632"/>
        <dbReference type="ChEBI" id="CHEBI:55376"/>
        <dbReference type="ChEBI" id="CHEBI:60344"/>
    </reaction>
    <physiologicalReaction direction="left-to-right" evidence="1">
        <dbReference type="Rhea" id="RHEA:78092"/>
    </physiologicalReaction>
</comment>
<comment type="catalytic activity">
    <reaction evidence="1">
        <text>Fe(III)-heme b-[protein] + nitric oxide + H2O = Fe(II)-heme b-[protein] + nitrite + 2 H(+)</text>
        <dbReference type="Rhea" id="RHEA:77711"/>
        <dbReference type="Rhea" id="RHEA-COMP:18975"/>
        <dbReference type="Rhea" id="RHEA-COMP:18976"/>
        <dbReference type="ChEBI" id="CHEBI:15377"/>
        <dbReference type="ChEBI" id="CHEBI:15378"/>
        <dbReference type="ChEBI" id="CHEBI:16301"/>
        <dbReference type="ChEBI" id="CHEBI:16480"/>
        <dbReference type="ChEBI" id="CHEBI:55376"/>
        <dbReference type="ChEBI" id="CHEBI:60344"/>
    </reaction>
    <physiologicalReaction direction="right-to-left" evidence="1">
        <dbReference type="Rhea" id="RHEA:77713"/>
    </physiologicalReaction>
</comment>
<comment type="catalytic activity">
    <reaction evidence="1">
        <text>2 superoxide + 2 H(+) = H2O2 + O2</text>
        <dbReference type="Rhea" id="RHEA:20696"/>
        <dbReference type="ChEBI" id="CHEBI:15378"/>
        <dbReference type="ChEBI" id="CHEBI:15379"/>
        <dbReference type="ChEBI" id="CHEBI:16240"/>
        <dbReference type="ChEBI" id="CHEBI:18421"/>
        <dbReference type="EC" id="1.15.1.1"/>
    </reaction>
    <physiologicalReaction direction="left-to-right" evidence="1">
        <dbReference type="Rhea" id="RHEA:20697"/>
    </physiologicalReaction>
</comment>
<comment type="catalytic activity">
    <reaction evidence="1">
        <text>H2O2 + AH2 = A + 2 H2O</text>
        <dbReference type="Rhea" id="RHEA:30275"/>
        <dbReference type="ChEBI" id="CHEBI:13193"/>
        <dbReference type="ChEBI" id="CHEBI:15377"/>
        <dbReference type="ChEBI" id="CHEBI:16240"/>
        <dbReference type="ChEBI" id="CHEBI:17499"/>
    </reaction>
    <physiologicalReaction direction="left-to-right" evidence="1">
        <dbReference type="Rhea" id="RHEA:30276"/>
    </physiologicalReaction>
</comment>
<comment type="subunit">
    <text evidence="1">Monomeric.</text>
</comment>
<comment type="subcellular location">
    <subcellularLocation>
        <location evidence="1">Cytoplasm</location>
    </subcellularLocation>
    <subcellularLocation>
        <location evidence="1">Nucleus</location>
    </subcellularLocation>
</comment>
<comment type="tissue specificity">
    <text evidence="4">Expressed in all tissues examined, with highest levels in brain and eye, and considerably lower levels in skin, gut, heart, gill, liver and muscle.</text>
</comment>
<comment type="similarity">
    <text evidence="2">Belongs to the globin family.</text>
</comment>
<keyword id="KW-0963">Cytoplasm</keyword>
<keyword id="KW-0349">Heme</keyword>
<keyword id="KW-0408">Iron</keyword>
<keyword id="KW-0479">Metal-binding</keyword>
<keyword id="KW-0539">Nucleus</keyword>
<keyword id="KW-0560">Oxidoreductase</keyword>
<keyword id="KW-1185">Reference proteome</keyword>
<accession>Q575S8</accession>
<proteinExistence type="evidence at transcript level"/>
<organism>
    <name type="scientific">Danio rerio</name>
    <name type="common">Zebrafish</name>
    <name type="synonym">Brachydanio rerio</name>
    <dbReference type="NCBI Taxonomy" id="7955"/>
    <lineage>
        <taxon>Eukaryota</taxon>
        <taxon>Metazoa</taxon>
        <taxon>Chordata</taxon>
        <taxon>Craniata</taxon>
        <taxon>Vertebrata</taxon>
        <taxon>Euteleostomi</taxon>
        <taxon>Actinopterygii</taxon>
        <taxon>Neopterygii</taxon>
        <taxon>Teleostei</taxon>
        <taxon>Ostariophysi</taxon>
        <taxon>Cypriniformes</taxon>
        <taxon>Danionidae</taxon>
        <taxon>Danioninae</taxon>
        <taxon>Danio</taxon>
    </lineage>
</organism>